<reference key="1">
    <citation type="journal article" date="1999" name="DNA Res.">
        <title>Complete genome sequence of an aerobic hyper-thermophilic crenarchaeon, Aeropyrum pernix K1.</title>
        <authorList>
            <person name="Kawarabayasi Y."/>
            <person name="Hino Y."/>
            <person name="Horikawa H."/>
            <person name="Yamazaki S."/>
            <person name="Haikawa Y."/>
            <person name="Jin-no K."/>
            <person name="Takahashi M."/>
            <person name="Sekine M."/>
            <person name="Baba S."/>
            <person name="Ankai A."/>
            <person name="Kosugi H."/>
            <person name="Hosoyama A."/>
            <person name="Fukui S."/>
            <person name="Nagai Y."/>
            <person name="Nishijima K."/>
            <person name="Nakazawa H."/>
            <person name="Takamiya M."/>
            <person name="Masuda S."/>
            <person name="Funahashi T."/>
            <person name="Tanaka T."/>
            <person name="Kudoh Y."/>
            <person name="Yamazaki J."/>
            <person name="Kushida N."/>
            <person name="Oguchi A."/>
            <person name="Aoki K."/>
            <person name="Kubota K."/>
            <person name="Nakamura Y."/>
            <person name="Nomura N."/>
            <person name="Sako Y."/>
            <person name="Kikuchi H."/>
        </authorList>
    </citation>
    <scope>NUCLEOTIDE SEQUENCE [LARGE SCALE GENOMIC DNA]</scope>
    <source>
        <strain>ATCC 700893 / DSM 11879 / JCM 9820 / NBRC 100138 / K1</strain>
    </source>
</reference>
<comment type="function">
    <text evidence="1">Allows the formation of correctly charged Asn-tRNA(Asn) or Gln-tRNA(Gln) through the transamidation of misacylated Asp-tRNA(Asn) or Glu-tRNA(Gln) in organisms which lack either or both of asparaginyl-tRNA or glutaminyl-tRNA synthetases. The reaction takes place in the presence of glutamine and ATP through an activated phospho-Asp-tRNA(Asn) or phospho-Glu-tRNA(Gln) (By similarity).</text>
</comment>
<comment type="catalytic activity">
    <reaction>
        <text>L-glutamyl-tRNA(Gln) + L-glutamine + ATP + H2O = L-glutaminyl-tRNA(Gln) + L-glutamate + ADP + phosphate + H(+)</text>
        <dbReference type="Rhea" id="RHEA:17521"/>
        <dbReference type="Rhea" id="RHEA-COMP:9681"/>
        <dbReference type="Rhea" id="RHEA-COMP:9684"/>
        <dbReference type="ChEBI" id="CHEBI:15377"/>
        <dbReference type="ChEBI" id="CHEBI:15378"/>
        <dbReference type="ChEBI" id="CHEBI:29985"/>
        <dbReference type="ChEBI" id="CHEBI:30616"/>
        <dbReference type="ChEBI" id="CHEBI:43474"/>
        <dbReference type="ChEBI" id="CHEBI:58359"/>
        <dbReference type="ChEBI" id="CHEBI:78520"/>
        <dbReference type="ChEBI" id="CHEBI:78521"/>
        <dbReference type="ChEBI" id="CHEBI:456216"/>
    </reaction>
</comment>
<comment type="catalytic activity">
    <reaction>
        <text>L-aspartyl-tRNA(Asn) + L-glutamine + ATP + H2O = L-asparaginyl-tRNA(Asn) + L-glutamate + ADP + phosphate + 2 H(+)</text>
        <dbReference type="Rhea" id="RHEA:14513"/>
        <dbReference type="Rhea" id="RHEA-COMP:9674"/>
        <dbReference type="Rhea" id="RHEA-COMP:9677"/>
        <dbReference type="ChEBI" id="CHEBI:15377"/>
        <dbReference type="ChEBI" id="CHEBI:15378"/>
        <dbReference type="ChEBI" id="CHEBI:29985"/>
        <dbReference type="ChEBI" id="CHEBI:30616"/>
        <dbReference type="ChEBI" id="CHEBI:43474"/>
        <dbReference type="ChEBI" id="CHEBI:58359"/>
        <dbReference type="ChEBI" id="CHEBI:78515"/>
        <dbReference type="ChEBI" id="CHEBI:78516"/>
        <dbReference type="ChEBI" id="CHEBI:456216"/>
    </reaction>
</comment>
<comment type="subunit">
    <text evidence="1">Heterotrimer of A, B and C subunits.</text>
</comment>
<comment type="similarity">
    <text evidence="2">Belongs to the GatB/GatE family. GatB subfamily.</text>
</comment>
<sequence>MNDRYTNVKIGLEIHVQLSNAGSKLFCGCDSEYRGYKPNTNVCPVCLGLPGALPVPSRRPIVLAIAASMALGCRVPGTVVFTRKHYFYPDLPKNYQITQFEKAGGAPVCMGGVLEYLNTDSWRWERARIRRINLEEDPGKTYYEGSILTSRYALVDYNRSGVPLLEIVTEPDIPSPRHARMLIDYLLLTLEYIGATNPRLEGVFRVDANISIEGGERVEVKNIGSTQDVEKALKFEISRQRLIVERGGKVERETRHWDAERGMTKPLRLKEEEADYLYFPDPDLPPVEITEDMLAEAEKLASKTPGTIYREIESMGVRREIAWSITSTLPAARLFLEAVKLGADPRIAARLVGVDLKGELKEMGKDLYSPNNWPPPQSIAILSNLVARGDYTYDSIKGLVVPKLAANPGSDVKSLLPEKVKDIERLVEEVLNREKRAVQDYLAGKKKALNYLVGQVMRAAKGRALDPRQAREILLRRLSTVKEEDR</sequence>
<feature type="chain" id="PRO_0000148867" description="Aspartyl/glutamyl-tRNA(Asn/Gln) amidotransferase subunit B">
    <location>
        <begin position="1"/>
        <end position="486"/>
    </location>
</feature>
<organism>
    <name type="scientific">Aeropyrum pernix (strain ATCC 700893 / DSM 11879 / JCM 9820 / NBRC 100138 / K1)</name>
    <dbReference type="NCBI Taxonomy" id="272557"/>
    <lineage>
        <taxon>Archaea</taxon>
        <taxon>Thermoproteota</taxon>
        <taxon>Thermoprotei</taxon>
        <taxon>Desulfurococcales</taxon>
        <taxon>Desulfurococcaceae</taxon>
        <taxon>Aeropyrum</taxon>
    </lineage>
</organism>
<accession>Q9YB79</accession>
<proteinExistence type="inferred from homology"/>
<name>GATB_AERPE</name>
<evidence type="ECO:0000250" key="1"/>
<evidence type="ECO:0000305" key="2"/>
<keyword id="KW-0067">ATP-binding</keyword>
<keyword id="KW-0436">Ligase</keyword>
<keyword id="KW-0547">Nucleotide-binding</keyword>
<keyword id="KW-0648">Protein biosynthesis</keyword>
<keyword id="KW-1185">Reference proteome</keyword>
<gene>
    <name type="primary">gatB</name>
    <name type="ordered locus">APE_1718</name>
</gene>
<protein>
    <recommendedName>
        <fullName>Aspartyl/glutamyl-tRNA(Asn/Gln) amidotransferase subunit B</fullName>
        <shortName>Asp/Glu-ADT subunit B</shortName>
        <ecNumber>6.3.5.-</ecNumber>
    </recommendedName>
</protein>
<dbReference type="EC" id="6.3.5.-"/>
<dbReference type="EMBL" id="BA000002">
    <property type="protein sequence ID" value="BAA80719.1"/>
    <property type="molecule type" value="Genomic_DNA"/>
</dbReference>
<dbReference type="PIR" id="B72554">
    <property type="entry name" value="B72554"/>
</dbReference>
<dbReference type="RefSeq" id="WP_010866549.1">
    <property type="nucleotide sequence ID" value="NC_000854.2"/>
</dbReference>
<dbReference type="SMR" id="Q9YB79"/>
<dbReference type="STRING" id="272557.APE_1718"/>
<dbReference type="EnsemblBacteria" id="BAA80719">
    <property type="protein sequence ID" value="BAA80719"/>
    <property type="gene ID" value="APE_1718"/>
</dbReference>
<dbReference type="GeneID" id="1446194"/>
<dbReference type="KEGG" id="ape:APE_1718"/>
<dbReference type="PATRIC" id="fig|272557.25.peg.1153"/>
<dbReference type="eggNOG" id="arCOG01718">
    <property type="taxonomic scope" value="Archaea"/>
</dbReference>
<dbReference type="Proteomes" id="UP000002518">
    <property type="component" value="Chromosome"/>
</dbReference>
<dbReference type="GO" id="GO:0050566">
    <property type="term" value="F:asparaginyl-tRNA synthase (glutamine-hydrolyzing) activity"/>
    <property type="evidence" value="ECO:0007669"/>
    <property type="project" value="RHEA"/>
</dbReference>
<dbReference type="GO" id="GO:0005524">
    <property type="term" value="F:ATP binding"/>
    <property type="evidence" value="ECO:0007669"/>
    <property type="project" value="UniProtKB-KW"/>
</dbReference>
<dbReference type="GO" id="GO:0050567">
    <property type="term" value="F:glutaminyl-tRNA synthase (glutamine-hydrolyzing) activity"/>
    <property type="evidence" value="ECO:0007669"/>
    <property type="project" value="UniProtKB-UniRule"/>
</dbReference>
<dbReference type="GO" id="GO:0070681">
    <property type="term" value="P:glutaminyl-tRNAGln biosynthesis via transamidation"/>
    <property type="evidence" value="ECO:0007669"/>
    <property type="project" value="TreeGrafter"/>
</dbReference>
<dbReference type="GO" id="GO:0006412">
    <property type="term" value="P:translation"/>
    <property type="evidence" value="ECO:0007669"/>
    <property type="project" value="UniProtKB-UniRule"/>
</dbReference>
<dbReference type="FunFam" id="1.10.10.410:FF:000001">
    <property type="entry name" value="Aspartyl/glutamyl-tRNA(Asn/Gln) amidotransferase subunit B"/>
    <property type="match status" value="1"/>
</dbReference>
<dbReference type="Gene3D" id="1.10.10.410">
    <property type="match status" value="1"/>
</dbReference>
<dbReference type="HAMAP" id="MF_00121">
    <property type="entry name" value="GatB"/>
    <property type="match status" value="1"/>
</dbReference>
<dbReference type="InterPro" id="IPR017959">
    <property type="entry name" value="Asn/Gln-tRNA_amidoTrfase_suB/E"/>
</dbReference>
<dbReference type="InterPro" id="IPR006075">
    <property type="entry name" value="Asn/Gln-tRNA_Trfase_suB/E_cat"/>
</dbReference>
<dbReference type="InterPro" id="IPR018027">
    <property type="entry name" value="Asn/Gln_amidotransferase"/>
</dbReference>
<dbReference type="InterPro" id="IPR003789">
    <property type="entry name" value="Asn/Gln_tRNA_amidoTrase-B-like"/>
</dbReference>
<dbReference type="InterPro" id="IPR004413">
    <property type="entry name" value="GatB"/>
</dbReference>
<dbReference type="InterPro" id="IPR023168">
    <property type="entry name" value="GatB_Yqey_C_2"/>
</dbReference>
<dbReference type="InterPro" id="IPR017958">
    <property type="entry name" value="Gln-tRNA_amidoTrfase_suB_CS"/>
</dbReference>
<dbReference type="InterPro" id="IPR014746">
    <property type="entry name" value="Gln_synth/guanido_kin_cat_dom"/>
</dbReference>
<dbReference type="NCBIfam" id="TIGR00133">
    <property type="entry name" value="gatB"/>
    <property type="match status" value="1"/>
</dbReference>
<dbReference type="NCBIfam" id="NF004012">
    <property type="entry name" value="PRK05477.1-2"/>
    <property type="match status" value="1"/>
</dbReference>
<dbReference type="PANTHER" id="PTHR11659">
    <property type="entry name" value="GLUTAMYL-TRNA GLN AMIDOTRANSFERASE SUBUNIT B MITOCHONDRIAL AND PROKARYOTIC PET112-RELATED"/>
    <property type="match status" value="1"/>
</dbReference>
<dbReference type="PANTHER" id="PTHR11659:SF0">
    <property type="entry name" value="GLUTAMYL-TRNA(GLN) AMIDOTRANSFERASE SUBUNIT B, MITOCHONDRIAL"/>
    <property type="match status" value="1"/>
</dbReference>
<dbReference type="Pfam" id="PF02934">
    <property type="entry name" value="GatB_N"/>
    <property type="match status" value="1"/>
</dbReference>
<dbReference type="Pfam" id="PF02637">
    <property type="entry name" value="GatB_Yqey"/>
    <property type="match status" value="1"/>
</dbReference>
<dbReference type="SMART" id="SM00845">
    <property type="entry name" value="GatB_Yqey"/>
    <property type="match status" value="1"/>
</dbReference>
<dbReference type="SUPFAM" id="SSF89095">
    <property type="entry name" value="GatB/YqeY motif"/>
    <property type="match status" value="1"/>
</dbReference>
<dbReference type="SUPFAM" id="SSF55931">
    <property type="entry name" value="Glutamine synthetase/guanido kinase"/>
    <property type="match status" value="1"/>
</dbReference>
<dbReference type="PROSITE" id="PS01234">
    <property type="entry name" value="GATB"/>
    <property type="match status" value="1"/>
</dbReference>